<accession>Q8N1Q1</accession>
<name>CAH13_HUMAN</name>
<gene>
    <name type="primary">CA13</name>
</gene>
<comment type="function">
    <text>Reversible hydration of carbon dioxide.</text>
</comment>
<comment type="catalytic activity">
    <reaction>
        <text>hydrogencarbonate + H(+) = CO2 + H2O</text>
        <dbReference type="Rhea" id="RHEA:10748"/>
        <dbReference type="ChEBI" id="CHEBI:15377"/>
        <dbReference type="ChEBI" id="CHEBI:15378"/>
        <dbReference type="ChEBI" id="CHEBI:16526"/>
        <dbReference type="ChEBI" id="CHEBI:17544"/>
        <dbReference type="EC" id="4.2.1.1"/>
    </reaction>
</comment>
<comment type="cofactor">
    <cofactor evidence="4">
        <name>Zn(2+)</name>
        <dbReference type="ChEBI" id="CHEBI:29105"/>
    </cofactor>
</comment>
<comment type="activity regulation">
    <text evidence="4">Inhibited by acetazolamide.</text>
</comment>
<comment type="biophysicochemical properties">
    <kinetics>
        <KM evidence="4">13.8 mM for CO(2)</KM>
    </kinetics>
</comment>
<comment type="interaction">
    <interactant intactId="EBI-11982647">
        <id>Q8N1Q1</id>
    </interactant>
    <interactant intactId="EBI-11982645">
        <id>Q8N4Y2-3</id>
        <label>CRACR2B</label>
    </interactant>
    <organismsDiffer>false</organismsDiffer>
    <experiments>3</experiments>
</comment>
<comment type="interaction">
    <interactant intactId="EBI-11982647">
        <id>Q8N1Q1</id>
    </interactant>
    <interactant intactId="EBI-3453588">
        <id>Q6UUV7</id>
        <label>CRTC3</label>
    </interactant>
    <organismsDiffer>false</organismsDiffer>
    <experiments>3</experiments>
</comment>
<comment type="tissue specificity">
    <text evidence="3">Expressed in thymus, small intestine, spleen, prostate, ovary, colon and testis.</text>
</comment>
<comment type="similarity">
    <text evidence="5">Belongs to the alpha-carbonic anhydrase family.</text>
</comment>
<dbReference type="EC" id="4.2.1.1"/>
<dbReference type="EMBL" id="AK095314">
    <property type="protein sequence ID" value="BAC04528.1"/>
    <property type="molecule type" value="mRNA"/>
</dbReference>
<dbReference type="EMBL" id="BC052602">
    <property type="protein sequence ID" value="AAH52602.1"/>
    <property type="molecule type" value="mRNA"/>
</dbReference>
<dbReference type="CCDS" id="CCDS6236.1"/>
<dbReference type="RefSeq" id="NP_940986.1">
    <property type="nucleotide sequence ID" value="NM_198584.3"/>
</dbReference>
<dbReference type="PDB" id="3CZV">
    <property type="method" value="X-ray"/>
    <property type="resolution" value="2.00 A"/>
    <property type="chains" value="A/B=1-262"/>
</dbReference>
<dbReference type="PDB" id="3D0N">
    <property type="method" value="X-ray"/>
    <property type="resolution" value="1.55 A"/>
    <property type="chains" value="A/B=1-262"/>
</dbReference>
<dbReference type="PDB" id="3DA2">
    <property type="method" value="X-ray"/>
    <property type="resolution" value="2.05 A"/>
    <property type="chains" value="A/B=1-261"/>
</dbReference>
<dbReference type="PDB" id="4HU1">
    <property type="method" value="X-ray"/>
    <property type="resolution" value="1.95 A"/>
    <property type="chains" value="A/B=1-262"/>
</dbReference>
<dbReference type="PDB" id="4KNM">
    <property type="method" value="X-ray"/>
    <property type="resolution" value="1.90 A"/>
    <property type="chains" value="A/B=1-262"/>
</dbReference>
<dbReference type="PDB" id="4KNN">
    <property type="method" value="X-ray"/>
    <property type="resolution" value="1.40 A"/>
    <property type="chains" value="A/B=1-262"/>
</dbReference>
<dbReference type="PDB" id="4QIZ">
    <property type="method" value="X-ray"/>
    <property type="resolution" value="1.55 A"/>
    <property type="chains" value="A/B=1-262"/>
</dbReference>
<dbReference type="PDB" id="4QJP">
    <property type="method" value="X-ray"/>
    <property type="resolution" value="1.62 A"/>
    <property type="chains" value="A/B=1-262"/>
</dbReference>
<dbReference type="PDB" id="4QJX">
    <property type="method" value="X-ray"/>
    <property type="resolution" value="1.95 A"/>
    <property type="chains" value="A=1-262"/>
</dbReference>
<dbReference type="PDB" id="4QSJ">
    <property type="method" value="X-ray"/>
    <property type="resolution" value="1.70 A"/>
    <property type="chains" value="A/B=1-262"/>
</dbReference>
<dbReference type="PDB" id="5E2N">
    <property type="method" value="X-ray"/>
    <property type="resolution" value="1.53 A"/>
    <property type="chains" value="A/B=1-262"/>
</dbReference>
<dbReference type="PDB" id="5LLA">
    <property type="method" value="X-ray"/>
    <property type="resolution" value="1.50 A"/>
    <property type="chains" value="A/B=1-262"/>
</dbReference>
<dbReference type="PDB" id="5LLN">
    <property type="method" value="X-ray"/>
    <property type="resolution" value="1.60 A"/>
    <property type="chains" value="A/B=1-262"/>
</dbReference>
<dbReference type="PDB" id="5OGJ">
    <property type="method" value="X-ray"/>
    <property type="resolution" value="1.06 A"/>
    <property type="chains" value="A/B=1-262"/>
</dbReference>
<dbReference type="PDB" id="5OHH">
    <property type="method" value="X-ray"/>
    <property type="resolution" value="1.42 A"/>
    <property type="chains" value="A/B=1-262"/>
</dbReference>
<dbReference type="PDB" id="6G5U">
    <property type="method" value="X-ray"/>
    <property type="resolution" value="1.70 A"/>
    <property type="chains" value="A/B=1-262"/>
</dbReference>
<dbReference type="PDBsum" id="3CZV"/>
<dbReference type="PDBsum" id="3D0N"/>
<dbReference type="PDBsum" id="3DA2"/>
<dbReference type="PDBsum" id="4HU1"/>
<dbReference type="PDBsum" id="4KNM"/>
<dbReference type="PDBsum" id="4KNN"/>
<dbReference type="PDBsum" id="4QIZ"/>
<dbReference type="PDBsum" id="4QJP"/>
<dbReference type="PDBsum" id="4QJX"/>
<dbReference type="PDBsum" id="4QSJ"/>
<dbReference type="PDBsum" id="5E2N"/>
<dbReference type="PDBsum" id="5LLA"/>
<dbReference type="PDBsum" id="5LLN"/>
<dbReference type="PDBsum" id="5OGJ"/>
<dbReference type="PDBsum" id="5OHH"/>
<dbReference type="PDBsum" id="6G5U"/>
<dbReference type="SMR" id="Q8N1Q1"/>
<dbReference type="BioGRID" id="132020">
    <property type="interactions" value="6"/>
</dbReference>
<dbReference type="FunCoup" id="Q8N1Q1">
    <property type="interactions" value="846"/>
</dbReference>
<dbReference type="IntAct" id="Q8N1Q1">
    <property type="interactions" value="2"/>
</dbReference>
<dbReference type="STRING" id="9606.ENSP00000318912"/>
<dbReference type="BindingDB" id="Q8N1Q1"/>
<dbReference type="ChEMBL" id="CHEMBL3912"/>
<dbReference type="DrugBank" id="DB00562">
    <property type="generic name" value="Benzthiazide"/>
</dbReference>
<dbReference type="DrugBank" id="DB00606">
    <property type="generic name" value="Cyclothiazide"/>
</dbReference>
<dbReference type="DrugBank" id="DB07115">
    <property type="generic name" value="N-(4-chlorobenzyl)-N-methylbenzene-1,4-disulfonamide"/>
</dbReference>
<dbReference type="DrugBank" id="DB00909">
    <property type="generic name" value="Zonisamide"/>
</dbReference>
<dbReference type="DrugCentral" id="Q8N1Q1"/>
<dbReference type="iPTMnet" id="Q8N1Q1"/>
<dbReference type="PhosphoSitePlus" id="Q8N1Q1"/>
<dbReference type="BioMuta" id="CA13"/>
<dbReference type="DMDM" id="30580350"/>
<dbReference type="OGP" id="Q8N1Q1"/>
<dbReference type="jPOST" id="Q8N1Q1"/>
<dbReference type="MassIVE" id="Q8N1Q1"/>
<dbReference type="PaxDb" id="9606-ENSP00000318912"/>
<dbReference type="PeptideAtlas" id="Q8N1Q1"/>
<dbReference type="ProteomicsDB" id="71627"/>
<dbReference type="Pumba" id="Q8N1Q1"/>
<dbReference type="Antibodypedia" id="12589">
    <property type="antibodies" value="196 antibodies from 29 providers"/>
</dbReference>
<dbReference type="DNASU" id="377677"/>
<dbReference type="Ensembl" id="ENST00000321764.4">
    <property type="protein sequence ID" value="ENSP00000318912.3"/>
    <property type="gene ID" value="ENSG00000185015.8"/>
</dbReference>
<dbReference type="GeneID" id="377677"/>
<dbReference type="KEGG" id="hsa:377677"/>
<dbReference type="MANE-Select" id="ENST00000321764.4">
    <property type="protein sequence ID" value="ENSP00000318912.3"/>
    <property type="RefSeq nucleotide sequence ID" value="NM_198584.3"/>
    <property type="RefSeq protein sequence ID" value="NP_940986.1"/>
</dbReference>
<dbReference type="UCSC" id="uc003ydg.3">
    <property type="organism name" value="human"/>
</dbReference>
<dbReference type="AGR" id="HGNC:14914"/>
<dbReference type="CTD" id="377677"/>
<dbReference type="DisGeNET" id="377677"/>
<dbReference type="GeneCards" id="CA13"/>
<dbReference type="HGNC" id="HGNC:14914">
    <property type="gene designation" value="CA13"/>
</dbReference>
<dbReference type="HPA" id="ENSG00000185015">
    <property type="expression patterns" value="Tissue enhanced (intestine)"/>
</dbReference>
<dbReference type="MIM" id="611436">
    <property type="type" value="gene"/>
</dbReference>
<dbReference type="neXtProt" id="NX_Q8N1Q1"/>
<dbReference type="OpenTargets" id="ENSG00000185015"/>
<dbReference type="PharmGKB" id="PA134891311"/>
<dbReference type="VEuPathDB" id="HostDB:ENSG00000185015"/>
<dbReference type="eggNOG" id="KOG0382">
    <property type="taxonomic scope" value="Eukaryota"/>
</dbReference>
<dbReference type="GeneTree" id="ENSGT00940000160659"/>
<dbReference type="HOGENOM" id="CLU_039326_2_1_1"/>
<dbReference type="InParanoid" id="Q8N1Q1"/>
<dbReference type="OMA" id="SHWHERF"/>
<dbReference type="OrthoDB" id="429145at2759"/>
<dbReference type="PAN-GO" id="Q8N1Q1">
    <property type="GO annotations" value="4 GO annotations based on evolutionary models"/>
</dbReference>
<dbReference type="PhylomeDB" id="Q8N1Q1"/>
<dbReference type="TreeFam" id="TF316425"/>
<dbReference type="PathwayCommons" id="Q8N1Q1"/>
<dbReference type="Reactome" id="R-HSA-1475029">
    <property type="pathway name" value="Reversible hydration of carbon dioxide"/>
</dbReference>
<dbReference type="SABIO-RK" id="Q8N1Q1"/>
<dbReference type="SignaLink" id="Q8N1Q1"/>
<dbReference type="BioGRID-ORCS" id="377677">
    <property type="hits" value="8 hits in 1161 CRISPR screens"/>
</dbReference>
<dbReference type="ChiTaRS" id="CA13">
    <property type="organism name" value="human"/>
</dbReference>
<dbReference type="EvolutionaryTrace" id="Q8N1Q1"/>
<dbReference type="GenomeRNAi" id="377677"/>
<dbReference type="Pharos" id="Q8N1Q1">
    <property type="development level" value="Tclin"/>
</dbReference>
<dbReference type="PRO" id="PR:Q8N1Q1"/>
<dbReference type="Proteomes" id="UP000005640">
    <property type="component" value="Chromosome 8"/>
</dbReference>
<dbReference type="RNAct" id="Q8N1Q1">
    <property type="molecule type" value="protein"/>
</dbReference>
<dbReference type="Bgee" id="ENSG00000185015">
    <property type="expression patterns" value="Expressed in jejunal mucosa and 176 other cell types or tissues"/>
</dbReference>
<dbReference type="GO" id="GO:0005737">
    <property type="term" value="C:cytoplasm"/>
    <property type="evidence" value="ECO:0000318"/>
    <property type="project" value="GO_Central"/>
</dbReference>
<dbReference type="GO" id="GO:0005829">
    <property type="term" value="C:cytosol"/>
    <property type="evidence" value="ECO:0000318"/>
    <property type="project" value="GO_Central"/>
</dbReference>
<dbReference type="GO" id="GO:0043231">
    <property type="term" value="C:intracellular membrane-bounded organelle"/>
    <property type="evidence" value="ECO:0007669"/>
    <property type="project" value="Ensembl"/>
</dbReference>
<dbReference type="GO" id="GO:0043209">
    <property type="term" value="C:myelin sheath"/>
    <property type="evidence" value="ECO:0007669"/>
    <property type="project" value="Ensembl"/>
</dbReference>
<dbReference type="GO" id="GO:0004089">
    <property type="term" value="F:carbonate dehydratase activity"/>
    <property type="evidence" value="ECO:0000318"/>
    <property type="project" value="GO_Central"/>
</dbReference>
<dbReference type="GO" id="GO:0008270">
    <property type="term" value="F:zinc ion binding"/>
    <property type="evidence" value="ECO:0007669"/>
    <property type="project" value="InterPro"/>
</dbReference>
<dbReference type="CDD" id="cd03119">
    <property type="entry name" value="alpha_CA_I_II_III_XIII"/>
    <property type="match status" value="1"/>
</dbReference>
<dbReference type="FunFam" id="3.10.200.10:FF:000001">
    <property type="entry name" value="Carbonic anhydrase 2"/>
    <property type="match status" value="1"/>
</dbReference>
<dbReference type="Gene3D" id="3.10.200.10">
    <property type="entry name" value="Alpha carbonic anhydrase"/>
    <property type="match status" value="1"/>
</dbReference>
<dbReference type="InterPro" id="IPR001148">
    <property type="entry name" value="CA_dom"/>
</dbReference>
<dbReference type="InterPro" id="IPR036398">
    <property type="entry name" value="CA_dom_sf"/>
</dbReference>
<dbReference type="InterPro" id="IPR023561">
    <property type="entry name" value="Carbonic_anhydrase_a-class"/>
</dbReference>
<dbReference type="InterPro" id="IPR018338">
    <property type="entry name" value="Carbonic_anhydrase_a-class_CS"/>
</dbReference>
<dbReference type="PANTHER" id="PTHR18952">
    <property type="entry name" value="CARBONIC ANHYDRASE"/>
    <property type="match status" value="1"/>
</dbReference>
<dbReference type="PANTHER" id="PTHR18952:SF81">
    <property type="entry name" value="CARBONIC ANHYDRASE 13"/>
    <property type="match status" value="1"/>
</dbReference>
<dbReference type="Pfam" id="PF00194">
    <property type="entry name" value="Carb_anhydrase"/>
    <property type="match status" value="1"/>
</dbReference>
<dbReference type="SMART" id="SM01057">
    <property type="entry name" value="Carb_anhydrase"/>
    <property type="match status" value="1"/>
</dbReference>
<dbReference type="SUPFAM" id="SSF51069">
    <property type="entry name" value="Carbonic anhydrase"/>
    <property type="match status" value="1"/>
</dbReference>
<dbReference type="PROSITE" id="PS00162">
    <property type="entry name" value="ALPHA_CA_1"/>
    <property type="match status" value="1"/>
</dbReference>
<dbReference type="PROSITE" id="PS51144">
    <property type="entry name" value="ALPHA_CA_2"/>
    <property type="match status" value="1"/>
</dbReference>
<reference key="1">
    <citation type="journal article" date="2004" name="Nat. Genet.">
        <title>Complete sequencing and characterization of 21,243 full-length human cDNAs.</title>
        <authorList>
            <person name="Ota T."/>
            <person name="Suzuki Y."/>
            <person name="Nishikawa T."/>
            <person name="Otsuki T."/>
            <person name="Sugiyama T."/>
            <person name="Irie R."/>
            <person name="Wakamatsu A."/>
            <person name="Hayashi K."/>
            <person name="Sato H."/>
            <person name="Nagai K."/>
            <person name="Kimura K."/>
            <person name="Makita H."/>
            <person name="Sekine M."/>
            <person name="Obayashi M."/>
            <person name="Nishi T."/>
            <person name="Shibahara T."/>
            <person name="Tanaka T."/>
            <person name="Ishii S."/>
            <person name="Yamamoto J."/>
            <person name="Saito K."/>
            <person name="Kawai Y."/>
            <person name="Isono Y."/>
            <person name="Nakamura Y."/>
            <person name="Nagahari K."/>
            <person name="Murakami K."/>
            <person name="Yasuda T."/>
            <person name="Iwayanagi T."/>
            <person name="Wagatsuma M."/>
            <person name="Shiratori A."/>
            <person name="Sudo H."/>
            <person name="Hosoiri T."/>
            <person name="Kaku Y."/>
            <person name="Kodaira H."/>
            <person name="Kondo H."/>
            <person name="Sugawara M."/>
            <person name="Takahashi M."/>
            <person name="Kanda K."/>
            <person name="Yokoi T."/>
            <person name="Furuya T."/>
            <person name="Kikkawa E."/>
            <person name="Omura Y."/>
            <person name="Abe K."/>
            <person name="Kamihara K."/>
            <person name="Katsuta N."/>
            <person name="Sato K."/>
            <person name="Tanikawa M."/>
            <person name="Yamazaki M."/>
            <person name="Ninomiya K."/>
            <person name="Ishibashi T."/>
            <person name="Yamashita H."/>
            <person name="Murakawa K."/>
            <person name="Fujimori K."/>
            <person name="Tanai H."/>
            <person name="Kimata M."/>
            <person name="Watanabe M."/>
            <person name="Hiraoka S."/>
            <person name="Chiba Y."/>
            <person name="Ishida S."/>
            <person name="Ono Y."/>
            <person name="Takiguchi S."/>
            <person name="Watanabe S."/>
            <person name="Yosida M."/>
            <person name="Hotuta T."/>
            <person name="Kusano J."/>
            <person name="Kanehori K."/>
            <person name="Takahashi-Fujii A."/>
            <person name="Hara H."/>
            <person name="Tanase T.-O."/>
            <person name="Nomura Y."/>
            <person name="Togiya S."/>
            <person name="Komai F."/>
            <person name="Hara R."/>
            <person name="Takeuchi K."/>
            <person name="Arita M."/>
            <person name="Imose N."/>
            <person name="Musashino K."/>
            <person name="Yuuki H."/>
            <person name="Oshima A."/>
            <person name="Sasaki N."/>
            <person name="Aotsuka S."/>
            <person name="Yoshikawa Y."/>
            <person name="Matsunawa H."/>
            <person name="Ichihara T."/>
            <person name="Shiohata N."/>
            <person name="Sano S."/>
            <person name="Moriya S."/>
            <person name="Momiyama H."/>
            <person name="Satoh N."/>
            <person name="Takami S."/>
            <person name="Terashima Y."/>
            <person name="Suzuki O."/>
            <person name="Nakagawa S."/>
            <person name="Senoh A."/>
            <person name="Mizoguchi H."/>
            <person name="Goto Y."/>
            <person name="Shimizu F."/>
            <person name="Wakebe H."/>
            <person name="Hishigaki H."/>
            <person name="Watanabe T."/>
            <person name="Sugiyama A."/>
            <person name="Takemoto M."/>
            <person name="Kawakami B."/>
            <person name="Yamazaki M."/>
            <person name="Watanabe K."/>
            <person name="Kumagai A."/>
            <person name="Itakura S."/>
            <person name="Fukuzumi Y."/>
            <person name="Fujimori Y."/>
            <person name="Komiyama M."/>
            <person name="Tashiro H."/>
            <person name="Tanigami A."/>
            <person name="Fujiwara T."/>
            <person name="Ono T."/>
            <person name="Yamada K."/>
            <person name="Fujii Y."/>
            <person name="Ozaki K."/>
            <person name="Hirao M."/>
            <person name="Ohmori Y."/>
            <person name="Kawabata A."/>
            <person name="Hikiji T."/>
            <person name="Kobatake N."/>
            <person name="Inagaki H."/>
            <person name="Ikema Y."/>
            <person name="Okamoto S."/>
            <person name="Okitani R."/>
            <person name="Kawakami T."/>
            <person name="Noguchi S."/>
            <person name="Itoh T."/>
            <person name="Shigeta K."/>
            <person name="Senba T."/>
            <person name="Matsumura K."/>
            <person name="Nakajima Y."/>
            <person name="Mizuno T."/>
            <person name="Morinaga M."/>
            <person name="Sasaki M."/>
            <person name="Togashi T."/>
            <person name="Oyama M."/>
            <person name="Hata H."/>
            <person name="Watanabe M."/>
            <person name="Komatsu T."/>
            <person name="Mizushima-Sugano J."/>
            <person name="Satoh T."/>
            <person name="Shirai Y."/>
            <person name="Takahashi Y."/>
            <person name="Nakagawa K."/>
            <person name="Okumura K."/>
            <person name="Nagase T."/>
            <person name="Nomura N."/>
            <person name="Kikuchi H."/>
            <person name="Masuho Y."/>
            <person name="Yamashita R."/>
            <person name="Nakai K."/>
            <person name="Yada T."/>
            <person name="Nakamura Y."/>
            <person name="Ohara O."/>
            <person name="Isogai T."/>
            <person name="Sugano S."/>
        </authorList>
    </citation>
    <scope>NUCLEOTIDE SEQUENCE [LARGE SCALE MRNA]</scope>
    <source>
        <tissue>Tongue</tissue>
    </source>
</reference>
<reference key="2">
    <citation type="journal article" date="2004" name="Genome Res.">
        <title>The status, quality, and expansion of the NIH full-length cDNA project: the Mammalian Gene Collection (MGC).</title>
        <authorList>
            <consortium name="The MGC Project Team"/>
        </authorList>
    </citation>
    <scope>NUCLEOTIDE SEQUENCE [LARGE SCALE MRNA]</scope>
    <source>
        <tissue>Pancreas</tissue>
    </source>
</reference>
<reference key="3">
    <citation type="journal article" date="2004" name="J. Biol. Chem.">
        <title>Characterization of CA XIII, a novel member of the carbonic anhydrase isozyme family.</title>
        <authorList>
            <person name="Lehtonen J."/>
            <person name="Shen B."/>
            <person name="Vihinen M."/>
            <person name="Casini A."/>
            <person name="Scozzafava A."/>
            <person name="Supuran C.T."/>
            <person name="Parkkila A.-K."/>
            <person name="Saarnio J."/>
            <person name="Kivelae A.J."/>
            <person name="Waheed A."/>
            <person name="Sly W.S."/>
            <person name="Parkkila S."/>
        </authorList>
    </citation>
    <scope>CHARACTERIZATION</scope>
    <scope>TISSUE SPECIFICITY</scope>
</reference>
<reference key="4">
    <citation type="journal article" date="2009" name="Proteins">
        <title>Crystal structure of human carbonic anhydrase XIII and its complex with the inhibitor acetazolamide.</title>
        <authorList>
            <person name="Di Fiore A."/>
            <person name="Monti S.M."/>
            <person name="Hilvo M."/>
            <person name="Parkkila S."/>
            <person name="Romano V."/>
            <person name="Scaloni A."/>
            <person name="Pedone C."/>
            <person name="Scozzafava A."/>
            <person name="Supuran C.T."/>
            <person name="De Simone G."/>
        </authorList>
    </citation>
    <scope>X-RAY CRYSTALLOGRAPHY (1.55 ANGSTROMS) IN COMPLEX WITH ZINC AND THE INHIBITOR ACETAZOLAMIDE</scope>
    <scope>BIOPHYSICOCHEMICAL PROPERTIES</scope>
    <scope>ACTIVITY REGULATION</scope>
    <scope>COFACTOR</scope>
</reference>
<reference key="5">
    <citation type="submission" date="2009-02" db="PDB data bank">
        <title>X-ray structure of human carbonic anhydrase 13 in complex with inhibitor.</title>
        <authorList>
            <consortium name="Structural genomics consortium (SGC)"/>
        </authorList>
    </citation>
    <scope>X-RAY CRYSTALLOGRAPHY (2.05 ANGSTROMS) OF 1-261 IN COMPLEX WITH INHIBITOR</scope>
</reference>
<proteinExistence type="evidence at protein level"/>
<evidence type="ECO:0000250" key="1">
    <source>
        <dbReference type="UniProtKB" id="P00918"/>
    </source>
</evidence>
<evidence type="ECO:0000255" key="2">
    <source>
        <dbReference type="PROSITE-ProRule" id="PRU01134"/>
    </source>
</evidence>
<evidence type="ECO:0000269" key="3">
    <source>
    </source>
</evidence>
<evidence type="ECO:0000269" key="4">
    <source>
    </source>
</evidence>
<evidence type="ECO:0000305" key="5"/>
<evidence type="ECO:0007829" key="6">
    <source>
        <dbReference type="PDB" id="5OGJ"/>
    </source>
</evidence>
<sequence length="262" mass="29443">MSRLSWGYREHNGPIHWKEFFPIADGDQQSPIEIKTKEVKYDSSLRPLSIKYDPSSAKIISNSGHSFNVDFDDTENKSVLRGGPLTGSYRLRQVHLHWGSADDHGSEHIVDGVSYAAELHVVHWNSDKYPSFVEAAHEPDGLAVLGVFLQIGEPNSQLQKITDTLDSIKEKGKQTRFTNFDLLSLLPPSWDYWTYPGSLTVPPLLESVTWIVLKQPINISSQQLAKFRSLLCTAEGEAAAFLVSNHRPPQPLKGRKVRASFH</sequence>
<organism>
    <name type="scientific">Homo sapiens</name>
    <name type="common">Human</name>
    <dbReference type="NCBI Taxonomy" id="9606"/>
    <lineage>
        <taxon>Eukaryota</taxon>
        <taxon>Metazoa</taxon>
        <taxon>Chordata</taxon>
        <taxon>Craniata</taxon>
        <taxon>Vertebrata</taxon>
        <taxon>Euteleostomi</taxon>
        <taxon>Mammalia</taxon>
        <taxon>Eutheria</taxon>
        <taxon>Euarchontoglires</taxon>
        <taxon>Primates</taxon>
        <taxon>Haplorrhini</taxon>
        <taxon>Catarrhini</taxon>
        <taxon>Hominidae</taxon>
        <taxon>Homo</taxon>
    </lineage>
</organism>
<feature type="chain" id="PRO_0000077440" description="Carbonic anhydrase 13">
    <location>
        <begin position="1"/>
        <end position="262"/>
    </location>
</feature>
<feature type="domain" description="Alpha-carbonic anhydrase" evidence="2">
    <location>
        <begin position="4"/>
        <end position="261"/>
    </location>
</feature>
<feature type="active site" description="Proton donor/acceptor" evidence="1">
    <location>
        <position position="65"/>
    </location>
</feature>
<feature type="binding site" evidence="4">
    <location>
        <position position="95"/>
    </location>
    <ligand>
        <name>Zn(2+)</name>
        <dbReference type="ChEBI" id="CHEBI:29105"/>
        <note>catalytic</note>
    </ligand>
</feature>
<feature type="binding site" evidence="4">
    <location>
        <position position="97"/>
    </location>
    <ligand>
        <name>Zn(2+)</name>
        <dbReference type="ChEBI" id="CHEBI:29105"/>
        <note>catalytic</note>
    </ligand>
</feature>
<feature type="binding site" evidence="4">
    <location>
        <position position="120"/>
    </location>
    <ligand>
        <name>Zn(2+)</name>
        <dbReference type="ChEBI" id="CHEBI:29105"/>
        <note>catalytic</note>
    </ligand>
</feature>
<feature type="binding site" evidence="1">
    <location>
        <begin position="200"/>
        <end position="201"/>
    </location>
    <ligand>
        <name>substrate</name>
    </ligand>
</feature>
<feature type="sequence variant" id="VAR_059207" description="In dbSNP:rs4740046.">
    <original>N</original>
    <variation>S</variation>
    <location>
        <position position="68"/>
    </location>
</feature>
<feature type="turn" evidence="6">
    <location>
        <begin position="10"/>
        <end position="12"/>
    </location>
</feature>
<feature type="helix" evidence="6">
    <location>
        <begin position="14"/>
        <end position="19"/>
    </location>
</feature>
<feature type="helix" evidence="6">
    <location>
        <begin position="22"/>
        <end position="25"/>
    </location>
</feature>
<feature type="strand" evidence="6">
    <location>
        <begin position="26"/>
        <end position="28"/>
    </location>
</feature>
<feature type="helix" evidence="6">
    <location>
        <begin position="36"/>
        <end position="38"/>
    </location>
</feature>
<feature type="strand" evidence="6">
    <location>
        <begin position="46"/>
        <end position="51"/>
    </location>
</feature>
<feature type="helix" evidence="6">
    <location>
        <begin position="54"/>
        <end position="56"/>
    </location>
</feature>
<feature type="strand" evidence="6">
    <location>
        <begin position="57"/>
        <end position="62"/>
    </location>
</feature>
<feature type="strand" evidence="6">
    <location>
        <begin position="64"/>
        <end position="71"/>
    </location>
</feature>
<feature type="strand" evidence="6">
    <location>
        <begin position="74"/>
        <end position="83"/>
    </location>
</feature>
<feature type="strand" evidence="6">
    <location>
        <begin position="89"/>
        <end position="98"/>
    </location>
</feature>
<feature type="strand" evidence="6">
    <location>
        <begin position="107"/>
        <end position="110"/>
    </location>
</feature>
<feature type="strand" evidence="6">
    <location>
        <begin position="116"/>
        <end position="125"/>
    </location>
</feature>
<feature type="turn" evidence="6">
    <location>
        <begin position="126"/>
        <end position="128"/>
    </location>
</feature>
<feature type="helix" evidence="6">
    <location>
        <begin position="132"/>
        <end position="135"/>
    </location>
</feature>
<feature type="strand" evidence="6">
    <location>
        <begin position="141"/>
        <end position="151"/>
    </location>
</feature>
<feature type="helix" evidence="6">
    <location>
        <begin position="156"/>
        <end position="158"/>
    </location>
</feature>
<feature type="helix" evidence="6">
    <location>
        <begin position="159"/>
        <end position="162"/>
    </location>
</feature>
<feature type="turn" evidence="6">
    <location>
        <begin position="163"/>
        <end position="165"/>
    </location>
</feature>
<feature type="helix" evidence="6">
    <location>
        <begin position="166"/>
        <end position="168"/>
    </location>
</feature>
<feature type="strand" evidence="6">
    <location>
        <begin position="174"/>
        <end position="176"/>
    </location>
</feature>
<feature type="helix" evidence="6">
    <location>
        <begin position="183"/>
        <end position="185"/>
    </location>
</feature>
<feature type="strand" evidence="6">
    <location>
        <begin position="192"/>
        <end position="197"/>
    </location>
</feature>
<feature type="strand" evidence="6">
    <location>
        <begin position="208"/>
        <end position="215"/>
    </location>
</feature>
<feature type="strand" evidence="6">
    <location>
        <begin position="217"/>
        <end position="219"/>
    </location>
</feature>
<feature type="helix" evidence="6">
    <location>
        <begin position="221"/>
        <end position="227"/>
    </location>
</feature>
<feature type="strand" evidence="6">
    <location>
        <begin position="230"/>
        <end position="234"/>
    </location>
</feature>
<feature type="strand" evidence="6">
    <location>
        <begin position="258"/>
        <end position="260"/>
    </location>
</feature>
<protein>
    <recommendedName>
        <fullName>Carbonic anhydrase 13</fullName>
        <ecNumber>4.2.1.1</ecNumber>
    </recommendedName>
    <alternativeName>
        <fullName>Carbonate dehydratase XIII</fullName>
    </alternativeName>
    <alternativeName>
        <fullName>Carbonic anhydrase XIII</fullName>
        <shortName>CA-XIII</shortName>
    </alternativeName>
</protein>
<keyword id="KW-0002">3D-structure</keyword>
<keyword id="KW-0456">Lyase</keyword>
<keyword id="KW-0479">Metal-binding</keyword>
<keyword id="KW-1267">Proteomics identification</keyword>
<keyword id="KW-1185">Reference proteome</keyword>
<keyword id="KW-0862">Zinc</keyword>